<keyword id="KW-0106">Calcium</keyword>
<keyword id="KW-1015">Disulfide bond</keyword>
<keyword id="KW-0325">Glycoprotein</keyword>
<keyword id="KW-1199">Hemostasis impairing toxin</keyword>
<keyword id="KW-0378">Hydrolase</keyword>
<keyword id="KW-0479">Metal-binding</keyword>
<keyword id="KW-0482">Metalloprotease</keyword>
<keyword id="KW-0645">Protease</keyword>
<keyword id="KW-0964">Secreted</keyword>
<keyword id="KW-0732">Signal</keyword>
<keyword id="KW-0800">Toxin</keyword>
<keyword id="KW-0862">Zinc</keyword>
<keyword id="KW-0865">Zymogen</keyword>
<reference key="1">
    <citation type="journal article" date="2011" name="J. Proteome Res.">
        <title>Identification of novel proteins from the venom of a cryptic snake Drysdalia coronoides by a combined transcriptomics and proteomics approach.</title>
        <authorList>
            <person name="Chatrath S.T."/>
            <person name="Chapeaurouge A."/>
            <person name="Lin Q."/>
            <person name="Lim T.K."/>
            <person name="Dunstan N."/>
            <person name="Mirtschin P."/>
            <person name="Kumar P.P."/>
            <person name="Kini R.M."/>
        </authorList>
    </citation>
    <scope>NUCLEOTIDE SEQUENCE [MRNA]</scope>
    <scope>IDENTIFICATION BY MASS SPECTROMETRY</scope>
    <source>
        <tissue>Venom</tissue>
        <tissue>Venom gland</tissue>
    </source>
</reference>
<accession>F8RKV9</accession>
<protein>
    <recommendedName>
        <fullName>Zinc metalloproteinase-disintegrin-like MTP9</fullName>
        <ecNumber>3.4.24.-</ecNumber>
    </recommendedName>
    <alternativeName>
        <fullName>Snake venom metalloproteinase</fullName>
        <shortName>SVMP</shortName>
    </alternativeName>
</protein>
<comment type="function">
    <text>Snake venom zinc metalloproteinase that may impair hemostasis in the prey.</text>
</comment>
<comment type="cofactor">
    <cofactor evidence="1">
        <name>Zn(2+)</name>
        <dbReference type="ChEBI" id="CHEBI:29105"/>
    </cofactor>
    <text evidence="1">Binds 1 zinc ion per subunit.</text>
</comment>
<comment type="subunit">
    <text evidence="1">Monomer.</text>
</comment>
<comment type="subcellular location">
    <subcellularLocation>
        <location>Secreted</location>
    </subcellularLocation>
</comment>
<comment type="tissue specificity">
    <text>Expressed by the venom gland.</text>
</comment>
<comment type="similarity">
    <text evidence="5">Belongs to the venom metalloproteinase (M12B) family. P-III subfamily.</text>
</comment>
<dbReference type="EC" id="3.4.24.-"/>
<dbReference type="EMBL" id="HM627202">
    <property type="protein sequence ID" value="AEH95529.1"/>
    <property type="molecule type" value="mRNA"/>
</dbReference>
<dbReference type="SMR" id="F8RKV9"/>
<dbReference type="MEROPS" id="M12.159"/>
<dbReference type="GO" id="GO:0005576">
    <property type="term" value="C:extracellular region"/>
    <property type="evidence" value="ECO:0007669"/>
    <property type="project" value="UniProtKB-SubCell"/>
</dbReference>
<dbReference type="GO" id="GO:0005886">
    <property type="term" value="C:plasma membrane"/>
    <property type="evidence" value="ECO:0007669"/>
    <property type="project" value="TreeGrafter"/>
</dbReference>
<dbReference type="GO" id="GO:0046872">
    <property type="term" value="F:metal ion binding"/>
    <property type="evidence" value="ECO:0007669"/>
    <property type="project" value="UniProtKB-KW"/>
</dbReference>
<dbReference type="GO" id="GO:0004222">
    <property type="term" value="F:metalloendopeptidase activity"/>
    <property type="evidence" value="ECO:0007669"/>
    <property type="project" value="InterPro"/>
</dbReference>
<dbReference type="GO" id="GO:0090729">
    <property type="term" value="F:toxin activity"/>
    <property type="evidence" value="ECO:0007669"/>
    <property type="project" value="UniProtKB-KW"/>
</dbReference>
<dbReference type="GO" id="GO:0006508">
    <property type="term" value="P:proteolysis"/>
    <property type="evidence" value="ECO:0007669"/>
    <property type="project" value="UniProtKB-KW"/>
</dbReference>
<dbReference type="CDD" id="cd04269">
    <property type="entry name" value="ZnMc_adamalysin_II_like"/>
    <property type="match status" value="1"/>
</dbReference>
<dbReference type="FunFam" id="3.40.390.10:FF:000002">
    <property type="entry name" value="Disintegrin and metalloproteinase domain-containing protein 22"/>
    <property type="match status" value="1"/>
</dbReference>
<dbReference type="FunFam" id="4.10.70.10:FF:000001">
    <property type="entry name" value="Disintegrin and metalloproteinase domain-containing protein 22"/>
    <property type="match status" value="1"/>
</dbReference>
<dbReference type="Gene3D" id="3.40.390.10">
    <property type="entry name" value="Collagenase (Catalytic Domain)"/>
    <property type="match status" value="1"/>
</dbReference>
<dbReference type="Gene3D" id="4.10.70.10">
    <property type="entry name" value="Disintegrin domain"/>
    <property type="match status" value="1"/>
</dbReference>
<dbReference type="InterPro" id="IPR006586">
    <property type="entry name" value="ADAM_Cys-rich"/>
</dbReference>
<dbReference type="InterPro" id="IPR018358">
    <property type="entry name" value="Disintegrin_CS"/>
</dbReference>
<dbReference type="InterPro" id="IPR001762">
    <property type="entry name" value="Disintegrin_dom"/>
</dbReference>
<dbReference type="InterPro" id="IPR036436">
    <property type="entry name" value="Disintegrin_dom_sf"/>
</dbReference>
<dbReference type="InterPro" id="IPR024079">
    <property type="entry name" value="MetalloPept_cat_dom_sf"/>
</dbReference>
<dbReference type="InterPro" id="IPR001590">
    <property type="entry name" value="Peptidase_M12B"/>
</dbReference>
<dbReference type="InterPro" id="IPR002870">
    <property type="entry name" value="Peptidase_M12B_N"/>
</dbReference>
<dbReference type="InterPro" id="IPR034027">
    <property type="entry name" value="Reprolysin_adamalysin"/>
</dbReference>
<dbReference type="PANTHER" id="PTHR11905">
    <property type="entry name" value="ADAM A DISINTEGRIN AND METALLOPROTEASE DOMAIN"/>
    <property type="match status" value="1"/>
</dbReference>
<dbReference type="PANTHER" id="PTHR11905:SF32">
    <property type="entry name" value="DISINTEGRIN AND METALLOPROTEINASE DOMAIN-CONTAINING PROTEIN 28"/>
    <property type="match status" value="1"/>
</dbReference>
<dbReference type="Pfam" id="PF08516">
    <property type="entry name" value="ADAM_CR"/>
    <property type="match status" value="1"/>
</dbReference>
<dbReference type="Pfam" id="PF00200">
    <property type="entry name" value="Disintegrin"/>
    <property type="match status" value="1"/>
</dbReference>
<dbReference type="Pfam" id="PF01562">
    <property type="entry name" value="Pep_M12B_propep"/>
    <property type="match status" value="1"/>
</dbReference>
<dbReference type="Pfam" id="PF01421">
    <property type="entry name" value="Reprolysin"/>
    <property type="match status" value="1"/>
</dbReference>
<dbReference type="PRINTS" id="PR00289">
    <property type="entry name" value="DISINTEGRIN"/>
</dbReference>
<dbReference type="SMART" id="SM00608">
    <property type="entry name" value="ACR"/>
    <property type="match status" value="1"/>
</dbReference>
<dbReference type="SMART" id="SM00050">
    <property type="entry name" value="DISIN"/>
    <property type="match status" value="1"/>
</dbReference>
<dbReference type="SUPFAM" id="SSF57552">
    <property type="entry name" value="Blood coagulation inhibitor (disintegrin)"/>
    <property type="match status" value="1"/>
</dbReference>
<dbReference type="SUPFAM" id="SSF55486">
    <property type="entry name" value="Metalloproteases ('zincins'), catalytic domain"/>
    <property type="match status" value="1"/>
</dbReference>
<dbReference type="PROSITE" id="PS50215">
    <property type="entry name" value="ADAM_MEPRO"/>
    <property type="match status" value="1"/>
</dbReference>
<dbReference type="PROSITE" id="PS00427">
    <property type="entry name" value="DISINTEGRIN_1"/>
    <property type="match status" value="1"/>
</dbReference>
<dbReference type="PROSITE" id="PS50214">
    <property type="entry name" value="DISINTEGRIN_2"/>
    <property type="match status" value="1"/>
</dbReference>
<dbReference type="PROSITE" id="PS00142">
    <property type="entry name" value="ZINC_PROTEASE"/>
    <property type="match status" value="1"/>
</dbReference>
<feature type="signal peptide" evidence="2">
    <location>
        <begin position="1"/>
        <end position="20"/>
    </location>
</feature>
<feature type="propeptide" id="PRO_0000425502" evidence="2">
    <location>
        <begin position="21"/>
        <end position="191"/>
    </location>
</feature>
<feature type="chain" id="PRO_0000425503" description="Zinc metalloproteinase-disintegrin-like MTP9">
    <location>
        <begin position="192"/>
        <end position="611"/>
    </location>
</feature>
<feature type="domain" description="Peptidase M12B" evidence="4">
    <location>
        <begin position="205"/>
        <end position="401"/>
    </location>
</feature>
<feature type="domain" description="Disintegrin" evidence="3">
    <location>
        <begin position="409"/>
        <end position="493"/>
    </location>
</feature>
<feature type="short sequence motif" description="D/ECD-tripeptide">
    <location>
        <begin position="471"/>
        <end position="473"/>
    </location>
</feature>
<feature type="binding site" evidence="1">
    <location>
        <position position="208"/>
    </location>
    <ligand>
        <name>Ca(2+)</name>
        <dbReference type="ChEBI" id="CHEBI:29108"/>
        <label>1</label>
    </ligand>
</feature>
<feature type="binding site" evidence="1">
    <location>
        <position position="292"/>
    </location>
    <ligand>
        <name>Ca(2+)</name>
        <dbReference type="ChEBI" id="CHEBI:29108"/>
        <label>1</label>
    </ligand>
</feature>
<feature type="binding site" evidence="1">
    <location>
        <position position="341"/>
    </location>
    <ligand>
        <name>Zn(2+)</name>
        <dbReference type="ChEBI" id="CHEBI:29105"/>
        <note>catalytic</note>
    </ligand>
</feature>
<feature type="binding site" evidence="1">
    <location>
        <position position="345"/>
    </location>
    <ligand>
        <name>Zn(2+)</name>
        <dbReference type="ChEBI" id="CHEBI:29105"/>
        <note>catalytic</note>
    </ligand>
</feature>
<feature type="binding site" evidence="1">
    <location>
        <position position="351"/>
    </location>
    <ligand>
        <name>Zn(2+)</name>
        <dbReference type="ChEBI" id="CHEBI:29105"/>
        <note>catalytic</note>
    </ligand>
</feature>
<feature type="binding site" evidence="1">
    <location>
        <position position="396"/>
    </location>
    <ligand>
        <name>Ca(2+)</name>
        <dbReference type="ChEBI" id="CHEBI:29108"/>
        <label>1</label>
    </ligand>
</feature>
<feature type="binding site" evidence="1">
    <location>
        <position position="399"/>
    </location>
    <ligand>
        <name>Ca(2+)</name>
        <dbReference type="ChEBI" id="CHEBI:29108"/>
        <label>1</label>
    </ligand>
</feature>
<feature type="binding site" evidence="1">
    <location>
        <position position="414"/>
    </location>
    <ligand>
        <name>Ca(2+)</name>
        <dbReference type="ChEBI" id="CHEBI:29108"/>
        <label>2</label>
    </ligand>
</feature>
<feature type="binding site" evidence="1">
    <location>
        <position position="416"/>
    </location>
    <ligand>
        <name>Ca(2+)</name>
        <dbReference type="ChEBI" id="CHEBI:29108"/>
        <label>2</label>
    </ligand>
</feature>
<feature type="binding site" evidence="1">
    <location>
        <position position="418"/>
    </location>
    <ligand>
        <name>Ca(2+)</name>
        <dbReference type="ChEBI" id="CHEBI:29108"/>
        <label>2</label>
    </ligand>
</feature>
<feature type="binding site" evidence="1">
    <location>
        <position position="421"/>
    </location>
    <ligand>
        <name>Ca(2+)</name>
        <dbReference type="ChEBI" id="CHEBI:29108"/>
        <label>2</label>
    </ligand>
</feature>
<feature type="binding site" evidence="1">
    <location>
        <position position="424"/>
    </location>
    <ligand>
        <name>Ca(2+)</name>
        <dbReference type="ChEBI" id="CHEBI:29108"/>
        <label>2</label>
    </ligand>
</feature>
<feature type="binding site" evidence="1">
    <location>
        <position position="473"/>
    </location>
    <ligand>
        <name>Ca(2+)</name>
        <dbReference type="ChEBI" id="CHEBI:29108"/>
        <label>3</label>
    </ligand>
</feature>
<feature type="binding site" evidence="1">
    <location>
        <position position="474"/>
    </location>
    <ligand>
        <name>Ca(2+)</name>
        <dbReference type="ChEBI" id="CHEBI:29108"/>
        <label>3</label>
    </ligand>
</feature>
<feature type="binding site" evidence="1">
    <location>
        <position position="476"/>
    </location>
    <ligand>
        <name>Ca(2+)</name>
        <dbReference type="ChEBI" id="CHEBI:29108"/>
        <label>3</label>
    </ligand>
</feature>
<feature type="binding site" evidence="1">
    <location>
        <position position="488"/>
    </location>
    <ligand>
        <name>Ca(2+)</name>
        <dbReference type="ChEBI" id="CHEBI:29108"/>
        <label>3</label>
    </ligand>
</feature>
<feature type="glycosylation site" description="N-linked (GlcNAc...) asparagine" evidence="2">
    <location>
        <position position="282"/>
    </location>
</feature>
<feature type="glycosylation site" description="N-linked (GlcNAc...) asparagine" evidence="2">
    <location>
        <position position="548"/>
    </location>
</feature>
<feature type="glycosylation site" description="N-linked (GlcNAc...) asparagine" evidence="2">
    <location>
        <position position="570"/>
    </location>
</feature>
<feature type="disulfide bond" evidence="1">
    <location>
        <begin position="316"/>
        <end position="396"/>
    </location>
</feature>
<feature type="disulfide bond" evidence="1">
    <location>
        <begin position="356"/>
        <end position="380"/>
    </location>
</feature>
<feature type="disulfide bond" evidence="1">
    <location>
        <begin position="358"/>
        <end position="363"/>
    </location>
</feature>
<feature type="disulfide bond" evidence="1">
    <location>
        <begin position="412"/>
        <end position="441"/>
    </location>
</feature>
<feature type="disulfide bond" evidence="1">
    <location>
        <begin position="423"/>
        <end position="436"/>
    </location>
</feature>
<feature type="disulfide bond" evidence="1">
    <location>
        <begin position="425"/>
        <end position="431"/>
    </location>
</feature>
<feature type="disulfide bond" evidence="1">
    <location>
        <begin position="435"/>
        <end position="456"/>
    </location>
</feature>
<feature type="disulfide bond" evidence="1">
    <location>
        <begin position="447"/>
        <end position="453"/>
    </location>
</feature>
<feature type="disulfide bond" evidence="1">
    <location>
        <begin position="452"/>
        <end position="478"/>
    </location>
</feature>
<feature type="disulfide bond" evidence="1">
    <location>
        <begin position="465"/>
        <end position="485"/>
    </location>
</feature>
<feature type="disulfide bond" evidence="1">
    <location>
        <begin position="472"/>
        <end position="504"/>
    </location>
</feature>
<feature type="disulfide bond" evidence="1">
    <location>
        <begin position="497"/>
        <end position="509"/>
    </location>
</feature>
<feature type="disulfide bond" evidence="1">
    <location>
        <begin position="516"/>
        <end position="566"/>
    </location>
</feature>
<feature type="disulfide bond" evidence="1">
    <location>
        <begin position="531"/>
        <end position="573"/>
    </location>
</feature>
<feature type="disulfide bond" evidence="1">
    <location>
        <begin position="541"/>
        <end position="575"/>
    </location>
</feature>
<feature type="disulfide bond" evidence="1">
    <location>
        <begin position="544"/>
        <end position="554"/>
    </location>
</feature>
<feature type="disulfide bond" evidence="1">
    <location>
        <begin position="561"/>
        <end position="599"/>
    </location>
</feature>
<feature type="disulfide bond" evidence="1">
    <location>
        <begin position="593"/>
        <end position="604"/>
    </location>
</feature>
<sequence length="611" mass="68086">MIEVLLVTICFTVFPYQGSSIILESGNVNDYEVVYPQKVPALPKGGVQNPQPETKYEDTMQYEFHVNGEPVVLHLERNKGLFSEDYTETHYAPDGREITTSPPVQDHCYYHGYIQNEADSSAAISACDGLKGHFKHRGETYFIEPLKLSNSESHAIYKDEHVEKEDEIPKICGVTQTTSESDEPIEKISQLTNTPEQDRYLQVKKYIELYVVVDNRMYRNYNSNRDAINERVYEMVNTLNVMYRPLNFFIALIGLEIWSNQDEINIEPEVAVTLRSFGEWRNTTLLPRKRNDNAQLLTGIDFNGATVGLAYVGTLCRPTQSVAVIQDHSKRTSMVASTMAHELGHNLGINHDSASCNCNAGPCIMSATISNQPLSEFSSCSVQEHQRYLLRVRPQCILNKPLSTDIVTPPVCGNYFVERGEECDCGSPQDCQDACCNAATCKLQHDCDSGECCEQCKFKKAGAECRAAKDDCDLPESCTGQSAECPTDSFQRNGHPCQNNQGYCYNGKCPIMTNQCIALKGPGVNVSPDECFTLKQNDPECGFCRIENGTKIPCAEKDKMCGKLLCQEGNATCICFPTTDDPDYGMVEPGTKCGDGKVCINRQCVDVQTAY</sequence>
<evidence type="ECO:0000250" key="1"/>
<evidence type="ECO:0000255" key="2"/>
<evidence type="ECO:0000255" key="3">
    <source>
        <dbReference type="PROSITE-ProRule" id="PRU00068"/>
    </source>
</evidence>
<evidence type="ECO:0000255" key="4">
    <source>
        <dbReference type="PROSITE-ProRule" id="PRU00276"/>
    </source>
</evidence>
<evidence type="ECO:0000305" key="5"/>
<proteinExistence type="evidence at protein level"/>
<organism>
    <name type="scientific">Drysdalia coronoides</name>
    <name type="common">White-lipped snake</name>
    <name type="synonym">Hoplocephalus coronoides</name>
    <dbReference type="NCBI Taxonomy" id="66186"/>
    <lineage>
        <taxon>Eukaryota</taxon>
        <taxon>Metazoa</taxon>
        <taxon>Chordata</taxon>
        <taxon>Craniata</taxon>
        <taxon>Vertebrata</taxon>
        <taxon>Euteleostomi</taxon>
        <taxon>Lepidosauria</taxon>
        <taxon>Squamata</taxon>
        <taxon>Bifurcata</taxon>
        <taxon>Unidentata</taxon>
        <taxon>Episquamata</taxon>
        <taxon>Toxicofera</taxon>
        <taxon>Serpentes</taxon>
        <taxon>Colubroidea</taxon>
        <taxon>Elapidae</taxon>
        <taxon>Notechinae</taxon>
        <taxon>Drysdalia</taxon>
    </lineage>
</organism>
<name>VM39_DRYCN</name>